<accession>B6TNK6</accession>
<accession>B4FZ31</accession>
<sequence>MGGRREAIERELKKLRAEREELDGRIRLLESQLEAGPAGFNGAAAGKGVGDDACGGSGACQSRVGNEFAPDGSLPADMIYRYSRHLLLPDFGVEGQRKLSQSSILVVGAGGLGSPLALYLAACGVGRLGIVDGDDVELNNLHRQIIHKEAYVGQSKVKSAADACREINSSIKVVEYHHTLKPCNALEVARKYDIVVDATDNLPTRYMISDCCVLLNKPLVSGAALGLEGQLTVYHHNGSPCYRCLFPTPPPVAACQRCSDSGVLGVVPGVIGCLQALEAIKVATGVGEPLCGRMLLFDALSARIRVVKLRGSSPDCTHCGENSVFTEEDFQKFDYESFTQSPMSDKAAPSVNVLPESARITCREYKKLADDGEPHLLLDVRPAHHFQIASISPSHNIPLSMLEEKLPALEASLKEAGEGSALVVLCRRGNDSQRAVQLLREKGFTSAKDIIGGLQAWGRDVDPDFPVY</sequence>
<feature type="chain" id="PRO_0000369213" description="Adenylyltransferase and sulfurtransferase MOCS3-1">
    <location>
        <begin position="1"/>
        <end position="468"/>
    </location>
</feature>
<feature type="domain" description="Rhodanese" evidence="1">
    <location>
        <begin position="371"/>
        <end position="466"/>
    </location>
</feature>
<feature type="active site" description="Glycyl thioester intermediate; for adenylyltransferase activity" evidence="1">
    <location>
        <position position="258"/>
    </location>
</feature>
<feature type="active site" description="Cysteine persulfide intermediate; for sulfurtransferase activity" evidence="1">
    <location>
        <position position="426"/>
    </location>
</feature>
<feature type="binding site" evidence="1">
    <location>
        <position position="111"/>
    </location>
    <ligand>
        <name>ATP</name>
        <dbReference type="ChEBI" id="CHEBI:30616"/>
    </ligand>
</feature>
<feature type="binding site" evidence="1">
    <location>
        <position position="132"/>
    </location>
    <ligand>
        <name>ATP</name>
        <dbReference type="ChEBI" id="CHEBI:30616"/>
    </ligand>
</feature>
<feature type="binding site" evidence="1">
    <location>
        <begin position="139"/>
        <end position="143"/>
    </location>
    <ligand>
        <name>ATP</name>
        <dbReference type="ChEBI" id="CHEBI:30616"/>
    </ligand>
</feature>
<feature type="binding site" evidence="1">
    <location>
        <position position="156"/>
    </location>
    <ligand>
        <name>ATP</name>
        <dbReference type="ChEBI" id="CHEBI:30616"/>
    </ligand>
</feature>
<feature type="binding site" evidence="1">
    <location>
        <begin position="200"/>
        <end position="201"/>
    </location>
    <ligand>
        <name>ATP</name>
        <dbReference type="ChEBI" id="CHEBI:30616"/>
    </ligand>
</feature>
<feature type="binding site" evidence="1">
    <location>
        <position position="241"/>
    </location>
    <ligand>
        <name>Zn(2+)</name>
        <dbReference type="ChEBI" id="CHEBI:29105"/>
    </ligand>
</feature>
<feature type="binding site" evidence="1">
    <location>
        <position position="244"/>
    </location>
    <ligand>
        <name>Zn(2+)</name>
        <dbReference type="ChEBI" id="CHEBI:29105"/>
    </ligand>
</feature>
<feature type="binding site" evidence="1">
    <location>
        <position position="316"/>
    </location>
    <ligand>
        <name>Zn(2+)</name>
        <dbReference type="ChEBI" id="CHEBI:29105"/>
    </ligand>
</feature>
<feature type="binding site" evidence="1">
    <location>
        <position position="319"/>
    </location>
    <ligand>
        <name>Zn(2+)</name>
        <dbReference type="ChEBI" id="CHEBI:29105"/>
    </ligand>
</feature>
<feature type="splice variant" id="VSP_036807" description="In isoform 2." evidence="2">
    <location>
        <begin position="167"/>
        <end position="191"/>
    </location>
</feature>
<feature type="sequence conflict" description="In Ref. 2; ACF87374." evidence="3" ref="2">
    <original>T</original>
    <variation>A</variation>
    <location>
        <position position="445"/>
    </location>
</feature>
<proteinExistence type="evidence at transcript level"/>
<protein>
    <recommendedName>
        <fullName evidence="1">Adenylyltransferase and sulfurtransferase MOCS3-1</fullName>
    </recommendedName>
    <alternativeName>
        <fullName evidence="1">Molybdenum cofactor synthesis protein 3-1</fullName>
    </alternativeName>
    <domain>
        <recommendedName>
            <fullName evidence="1">Molybdopterin-synthase adenylyltransferase 1</fullName>
            <ecNumber evidence="1">2.7.7.80</ecNumber>
        </recommendedName>
        <alternativeName>
            <fullName evidence="1">Adenylyltransferase MOCS3-1</fullName>
        </alternativeName>
        <alternativeName>
            <fullName evidence="1">Sulfur carrier protein MOCS2A adenylyltransferase 1</fullName>
        </alternativeName>
    </domain>
    <domain>
        <recommendedName>
            <fullName evidence="1">Molybdopterin-synthase sulfurtransferase 1</fullName>
            <ecNumber evidence="1">2.8.1.11</ecNumber>
        </recommendedName>
        <alternativeName>
            <fullName evidence="1">Sulfur carrier protein MOCS2A sulfurtransferase 1</fullName>
        </alternativeName>
        <alternativeName>
            <fullName evidence="1">Sulfurtransferase MOCS3-1</fullName>
        </alternativeName>
    </domain>
</protein>
<name>MOC31_MAIZE</name>
<reference key="1">
    <citation type="journal article" date="2009" name="Plant Mol. Biol.">
        <title>Insights into corn genes derived from large-scale cDNA sequencing.</title>
        <authorList>
            <person name="Alexandrov N.N."/>
            <person name="Brover V.V."/>
            <person name="Freidin S."/>
            <person name="Troukhan M.E."/>
            <person name="Tatarinova T.V."/>
            <person name="Zhang H."/>
            <person name="Swaller T.J."/>
            <person name="Lu Y.-P."/>
            <person name="Bouck J."/>
            <person name="Flavell R.B."/>
            <person name="Feldmann K.A."/>
        </authorList>
    </citation>
    <scope>NUCLEOTIDE SEQUENCE [LARGE SCALE MRNA] (ISOFORM 1)</scope>
</reference>
<reference key="2">
    <citation type="submission" date="2008-07" db="EMBL/GenBank/DDBJ databases">
        <title>Maize full-length cDNA project.</title>
        <authorList>
            <person name="Yu Y."/>
            <person name="Currie J."/>
            <person name="Lomeli R."/>
            <person name="Angelova A."/>
            <person name="Collura K."/>
            <person name="Wissotski M."/>
            <person name="Campos D."/>
            <person name="Kudrna D."/>
            <person name="Golser W."/>
            <person name="Ashely E."/>
            <person name="Haller K."/>
            <person name="Descour A."/>
            <person name="Fernandes J."/>
            <person name="Zuccolo A."/>
            <person name="Soderlund C."/>
            <person name="Walbot V."/>
        </authorList>
    </citation>
    <scope>NUCLEOTIDE SEQUENCE [LARGE SCALE MRNA] (ISOFORM 2)</scope>
    <source>
        <strain>cv. B73</strain>
    </source>
</reference>
<evidence type="ECO:0000255" key="1">
    <source>
        <dbReference type="HAMAP-Rule" id="MF_03049"/>
    </source>
</evidence>
<evidence type="ECO:0000303" key="2">
    <source ref="2"/>
</evidence>
<evidence type="ECO:0000305" key="3"/>
<keyword id="KW-0025">Alternative splicing</keyword>
<keyword id="KW-0067">ATP-binding</keyword>
<keyword id="KW-0963">Cytoplasm</keyword>
<keyword id="KW-0479">Metal-binding</keyword>
<keyword id="KW-0501">Molybdenum cofactor biosynthesis</keyword>
<keyword id="KW-0511">Multifunctional enzyme</keyword>
<keyword id="KW-0547">Nucleotide-binding</keyword>
<keyword id="KW-1185">Reference proteome</keyword>
<keyword id="KW-0808">Transferase</keyword>
<keyword id="KW-0819">tRNA processing</keyword>
<keyword id="KW-0862">Zinc</keyword>
<dbReference type="EC" id="2.7.7.80" evidence="1"/>
<dbReference type="EC" id="2.8.1.11" evidence="1"/>
<dbReference type="EMBL" id="EU966571">
    <property type="protein sequence ID" value="ACG38689.1"/>
    <property type="molecule type" value="mRNA"/>
</dbReference>
<dbReference type="EMBL" id="BT042369">
    <property type="protein sequence ID" value="ACF87374.1"/>
    <property type="molecule type" value="mRNA"/>
</dbReference>
<dbReference type="SMR" id="B6TNK6"/>
<dbReference type="FunCoup" id="B6TNK6">
    <property type="interactions" value="2536"/>
</dbReference>
<dbReference type="STRING" id="4577.B6TNK6"/>
<dbReference type="PaxDb" id="4577-GRMZM2G160842_P02"/>
<dbReference type="eggNOG" id="KOG2017">
    <property type="taxonomic scope" value="Eukaryota"/>
</dbReference>
<dbReference type="InParanoid" id="B6TNK6"/>
<dbReference type="UniPathway" id="UPA00344"/>
<dbReference type="UniPathway" id="UPA00988"/>
<dbReference type="Proteomes" id="UP000007305">
    <property type="component" value="Unplaced"/>
</dbReference>
<dbReference type="ExpressionAtlas" id="B6TNK6">
    <property type="expression patterns" value="baseline and differential"/>
</dbReference>
<dbReference type="GO" id="GO:0005737">
    <property type="term" value="C:cytoplasm"/>
    <property type="evidence" value="ECO:0000318"/>
    <property type="project" value="GO_Central"/>
</dbReference>
<dbReference type="GO" id="GO:0005829">
    <property type="term" value="C:cytosol"/>
    <property type="evidence" value="ECO:0007669"/>
    <property type="project" value="InterPro"/>
</dbReference>
<dbReference type="GO" id="GO:0005524">
    <property type="term" value="F:ATP binding"/>
    <property type="evidence" value="ECO:0007669"/>
    <property type="project" value="UniProtKB-KW"/>
</dbReference>
<dbReference type="GO" id="GO:0046872">
    <property type="term" value="F:metal ion binding"/>
    <property type="evidence" value="ECO:0007669"/>
    <property type="project" value="UniProtKB-KW"/>
</dbReference>
<dbReference type="GO" id="GO:0061605">
    <property type="term" value="F:molybdopterin-synthase adenylyltransferase activity"/>
    <property type="evidence" value="ECO:0007669"/>
    <property type="project" value="UniProtKB-EC"/>
</dbReference>
<dbReference type="GO" id="GO:0061604">
    <property type="term" value="F:molybdopterin-synthase sulfurtransferase activity"/>
    <property type="evidence" value="ECO:0007669"/>
    <property type="project" value="UniProtKB-EC"/>
</dbReference>
<dbReference type="GO" id="GO:0016779">
    <property type="term" value="F:nucleotidyltransferase activity"/>
    <property type="evidence" value="ECO:0000318"/>
    <property type="project" value="GO_Central"/>
</dbReference>
<dbReference type="GO" id="GO:0004792">
    <property type="term" value="F:thiosulfate-cyanide sulfurtransferase activity"/>
    <property type="evidence" value="ECO:0000318"/>
    <property type="project" value="GO_Central"/>
</dbReference>
<dbReference type="GO" id="GO:0042292">
    <property type="term" value="F:URM1 activating enzyme activity"/>
    <property type="evidence" value="ECO:0000318"/>
    <property type="project" value="GO_Central"/>
</dbReference>
<dbReference type="GO" id="GO:0006777">
    <property type="term" value="P:Mo-molybdopterin cofactor biosynthetic process"/>
    <property type="evidence" value="ECO:0007669"/>
    <property type="project" value="UniProtKB-UniRule"/>
</dbReference>
<dbReference type="GO" id="GO:0002143">
    <property type="term" value="P:tRNA wobble position uridine thiolation"/>
    <property type="evidence" value="ECO:0007669"/>
    <property type="project" value="InterPro"/>
</dbReference>
<dbReference type="CDD" id="cd00757">
    <property type="entry name" value="ThiF_MoeB_HesA_family"/>
    <property type="match status" value="1"/>
</dbReference>
<dbReference type="FunFam" id="3.40.250.10:FF:000014">
    <property type="entry name" value="Adenylyltransferase and sulfurtransferase MOCS3"/>
    <property type="match status" value="1"/>
</dbReference>
<dbReference type="FunFam" id="3.40.50.720:FF:000033">
    <property type="entry name" value="Adenylyltransferase and sulfurtransferase MOCS3"/>
    <property type="match status" value="1"/>
</dbReference>
<dbReference type="Gene3D" id="3.40.50.720">
    <property type="entry name" value="NAD(P)-binding Rossmann-like Domain"/>
    <property type="match status" value="1"/>
</dbReference>
<dbReference type="Gene3D" id="3.40.250.10">
    <property type="entry name" value="Rhodanese-like domain"/>
    <property type="match status" value="1"/>
</dbReference>
<dbReference type="HAMAP" id="MF_03049">
    <property type="entry name" value="MOCS3_Uba4"/>
    <property type="match status" value="1"/>
</dbReference>
<dbReference type="InterPro" id="IPR028885">
    <property type="entry name" value="MOCS3/Uba4"/>
</dbReference>
<dbReference type="InterPro" id="IPR001763">
    <property type="entry name" value="Rhodanese-like_dom"/>
</dbReference>
<dbReference type="InterPro" id="IPR036873">
    <property type="entry name" value="Rhodanese-like_dom_sf"/>
</dbReference>
<dbReference type="InterPro" id="IPR045886">
    <property type="entry name" value="ThiF/MoeB/HesA"/>
</dbReference>
<dbReference type="InterPro" id="IPR000594">
    <property type="entry name" value="ThiF_NAD_FAD-bd"/>
</dbReference>
<dbReference type="InterPro" id="IPR035985">
    <property type="entry name" value="Ubiquitin-activating_enz"/>
</dbReference>
<dbReference type="NCBIfam" id="NF004281">
    <property type="entry name" value="PRK05690.1"/>
    <property type="match status" value="1"/>
</dbReference>
<dbReference type="PANTHER" id="PTHR10953:SF102">
    <property type="entry name" value="ADENYLYLTRANSFERASE AND SULFURTRANSFERASE MOCS3"/>
    <property type="match status" value="1"/>
</dbReference>
<dbReference type="PANTHER" id="PTHR10953">
    <property type="entry name" value="UBIQUITIN-ACTIVATING ENZYME E1"/>
    <property type="match status" value="1"/>
</dbReference>
<dbReference type="Pfam" id="PF00581">
    <property type="entry name" value="Rhodanese"/>
    <property type="match status" value="1"/>
</dbReference>
<dbReference type="Pfam" id="PF00899">
    <property type="entry name" value="ThiF"/>
    <property type="match status" value="1"/>
</dbReference>
<dbReference type="SMART" id="SM00450">
    <property type="entry name" value="RHOD"/>
    <property type="match status" value="1"/>
</dbReference>
<dbReference type="SUPFAM" id="SSF69572">
    <property type="entry name" value="Activating enzymes of the ubiquitin-like proteins"/>
    <property type="match status" value="1"/>
</dbReference>
<dbReference type="PROSITE" id="PS50206">
    <property type="entry name" value="RHODANESE_3"/>
    <property type="match status" value="1"/>
</dbReference>
<gene>
    <name evidence="1" type="primary">MOCS3-1</name>
    <name evidence="1" type="synonym">CNX5</name>
    <name evidence="1" type="synonym">UBA4-1</name>
</gene>
<organism>
    <name type="scientific">Zea mays</name>
    <name type="common">Maize</name>
    <dbReference type="NCBI Taxonomy" id="4577"/>
    <lineage>
        <taxon>Eukaryota</taxon>
        <taxon>Viridiplantae</taxon>
        <taxon>Streptophyta</taxon>
        <taxon>Embryophyta</taxon>
        <taxon>Tracheophyta</taxon>
        <taxon>Spermatophyta</taxon>
        <taxon>Magnoliopsida</taxon>
        <taxon>Liliopsida</taxon>
        <taxon>Poales</taxon>
        <taxon>Poaceae</taxon>
        <taxon>PACMAD clade</taxon>
        <taxon>Panicoideae</taxon>
        <taxon>Andropogonodae</taxon>
        <taxon>Andropogoneae</taxon>
        <taxon>Tripsacinae</taxon>
        <taxon>Zea</taxon>
    </lineage>
</organism>
<comment type="function">
    <text evidence="1">Plays a central role in 2-thiolation of mcm(5)S(2)U at tRNA wobble positions of cytosolic tRNA(Lys), tRNA(Glu) and tRNA(Gln). Also essential during biosynthesis of the molybdenum cofactor. Acts by mediating the C-terminal thiocarboxylation of sulfur carriers URM1 and MOCS2A. Its N-terminus first activates URM1 and MOCS2A as acyl-adenylates (-COAMP), then the persulfide sulfur on the catalytic cysteine is transferred to URM1 and MOCS2A to form thiocarboxylation (-COSH) of their C-terminus. The reaction probably involves hydrogen sulfide that is generated from the persulfide intermediate and that acts as a nucleophile towards URM1 and MOCS2A. Subsequently, a transient disulfide bond is formed. Does not use thiosulfate as sulfur donor; NFS1 probably acting as a sulfur donor for thiocarboxylation reactions.</text>
</comment>
<comment type="catalytic activity">
    <reaction evidence="1">
        <text>[molybdopterin-synthase sulfur-carrier protein]-C-terminal Gly-Gly + ATP + H(+) = [molybdopterin-synthase sulfur-carrier protein]-C-terminal Gly-Gly-AMP + diphosphate</text>
        <dbReference type="Rhea" id="RHEA:43616"/>
        <dbReference type="Rhea" id="RHEA-COMP:12159"/>
        <dbReference type="Rhea" id="RHEA-COMP:12202"/>
        <dbReference type="ChEBI" id="CHEBI:15378"/>
        <dbReference type="ChEBI" id="CHEBI:30616"/>
        <dbReference type="ChEBI" id="CHEBI:33019"/>
        <dbReference type="ChEBI" id="CHEBI:90618"/>
        <dbReference type="ChEBI" id="CHEBI:90778"/>
        <dbReference type="EC" id="2.7.7.80"/>
    </reaction>
</comment>
<comment type="catalytic activity">
    <reaction evidence="1">
        <text>[molybdopterin-synthase sulfur-carrier protein]-C-terminal Gly-Gly-AMP + S-sulfanyl-L-cysteinyl-[cysteine desulfurase] + AH2 = [molybdopterin-synthase sulfur-carrier protein]-C-terminal-Gly-aminoethanethioate + L-cysteinyl-[cysteine desulfurase] + A + AMP + 2 H(+)</text>
        <dbReference type="Rhea" id="RHEA:48612"/>
        <dbReference type="Rhea" id="RHEA-COMP:12157"/>
        <dbReference type="Rhea" id="RHEA-COMP:12158"/>
        <dbReference type="Rhea" id="RHEA-COMP:12159"/>
        <dbReference type="Rhea" id="RHEA-COMP:19907"/>
        <dbReference type="ChEBI" id="CHEBI:13193"/>
        <dbReference type="ChEBI" id="CHEBI:15378"/>
        <dbReference type="ChEBI" id="CHEBI:17499"/>
        <dbReference type="ChEBI" id="CHEBI:29950"/>
        <dbReference type="ChEBI" id="CHEBI:61963"/>
        <dbReference type="ChEBI" id="CHEBI:90618"/>
        <dbReference type="ChEBI" id="CHEBI:232372"/>
        <dbReference type="ChEBI" id="CHEBI:456215"/>
        <dbReference type="EC" id="2.8.1.11"/>
    </reaction>
</comment>
<comment type="cofactor">
    <cofactor evidence="1">
        <name>Zn(2+)</name>
        <dbReference type="ChEBI" id="CHEBI:29105"/>
    </cofactor>
    <text evidence="1">Binds 1 zinc ion per subunit.</text>
</comment>
<comment type="pathway">
    <text evidence="1">tRNA modification; 5-methoxycarbonylmethyl-2-thiouridine-tRNA biosynthesis.</text>
</comment>
<comment type="pathway">
    <text evidence="1">Cofactor biosynthesis; molybdopterin biosynthesis.</text>
</comment>
<comment type="subcellular location">
    <subcellularLocation>
        <location evidence="1">Cytoplasm</location>
    </subcellularLocation>
</comment>
<comment type="alternative products">
    <event type="alternative splicing"/>
    <isoform>
        <id>B6TNK6-1</id>
        <name>1</name>
        <sequence type="displayed"/>
    </isoform>
    <isoform>
        <id>B6TNK6-2</id>
        <name>2</name>
        <sequence type="described" ref="VSP_036807"/>
    </isoform>
</comment>
<comment type="similarity">
    <text evidence="1">In the N-terminal section; belongs to the HesA/MoeB/ThiF family. UBA4 subfamily.</text>
</comment>